<accession>Q5P1E0</accession>
<dbReference type="EC" id="7.1.1.-" evidence="1"/>
<dbReference type="EMBL" id="CR555306">
    <property type="protein sequence ID" value="CAI08874.1"/>
    <property type="molecule type" value="Genomic_DNA"/>
</dbReference>
<dbReference type="SMR" id="Q5P1E0"/>
<dbReference type="STRING" id="76114.ebB168"/>
<dbReference type="KEGG" id="eba:ebB168"/>
<dbReference type="eggNOG" id="COG0713">
    <property type="taxonomic scope" value="Bacteria"/>
</dbReference>
<dbReference type="HOGENOM" id="CLU_144724_2_0_4"/>
<dbReference type="OrthoDB" id="9801357at2"/>
<dbReference type="Proteomes" id="UP000006552">
    <property type="component" value="Chromosome"/>
</dbReference>
<dbReference type="GO" id="GO:0030964">
    <property type="term" value="C:NADH dehydrogenase complex"/>
    <property type="evidence" value="ECO:0007669"/>
    <property type="project" value="TreeGrafter"/>
</dbReference>
<dbReference type="GO" id="GO:0005886">
    <property type="term" value="C:plasma membrane"/>
    <property type="evidence" value="ECO:0007669"/>
    <property type="project" value="UniProtKB-SubCell"/>
</dbReference>
<dbReference type="GO" id="GO:0050136">
    <property type="term" value="F:NADH:ubiquinone reductase (non-electrogenic) activity"/>
    <property type="evidence" value="ECO:0007669"/>
    <property type="project" value="UniProtKB-UniRule"/>
</dbReference>
<dbReference type="GO" id="GO:0048038">
    <property type="term" value="F:quinone binding"/>
    <property type="evidence" value="ECO:0007669"/>
    <property type="project" value="UniProtKB-KW"/>
</dbReference>
<dbReference type="GO" id="GO:0042773">
    <property type="term" value="P:ATP synthesis coupled electron transport"/>
    <property type="evidence" value="ECO:0007669"/>
    <property type="project" value="InterPro"/>
</dbReference>
<dbReference type="FunFam" id="1.10.287.3510:FF:000001">
    <property type="entry name" value="NADH-quinone oxidoreductase subunit K"/>
    <property type="match status" value="1"/>
</dbReference>
<dbReference type="Gene3D" id="1.10.287.3510">
    <property type="match status" value="1"/>
</dbReference>
<dbReference type="HAMAP" id="MF_01456">
    <property type="entry name" value="NDH1_NuoK"/>
    <property type="match status" value="1"/>
</dbReference>
<dbReference type="InterPro" id="IPR001133">
    <property type="entry name" value="NADH_UbQ_OxRdtase_chain4L/K"/>
</dbReference>
<dbReference type="InterPro" id="IPR039428">
    <property type="entry name" value="NUOK/Mnh_C1-like"/>
</dbReference>
<dbReference type="NCBIfam" id="NF004320">
    <property type="entry name" value="PRK05715.1-2"/>
    <property type="match status" value="1"/>
</dbReference>
<dbReference type="NCBIfam" id="NF004321">
    <property type="entry name" value="PRK05715.1-3"/>
    <property type="match status" value="1"/>
</dbReference>
<dbReference type="NCBIfam" id="NF004323">
    <property type="entry name" value="PRK05715.1-5"/>
    <property type="match status" value="1"/>
</dbReference>
<dbReference type="PANTHER" id="PTHR11434:SF21">
    <property type="entry name" value="NADH DEHYDROGENASE SUBUNIT 4L-RELATED"/>
    <property type="match status" value="1"/>
</dbReference>
<dbReference type="PANTHER" id="PTHR11434">
    <property type="entry name" value="NADH-UBIQUINONE OXIDOREDUCTASE SUBUNIT ND4L"/>
    <property type="match status" value="1"/>
</dbReference>
<dbReference type="Pfam" id="PF00420">
    <property type="entry name" value="Oxidored_q2"/>
    <property type="match status" value="1"/>
</dbReference>
<reference key="1">
    <citation type="journal article" date="2005" name="Arch. Microbiol.">
        <title>The genome sequence of an anaerobic aromatic-degrading denitrifying bacterium, strain EbN1.</title>
        <authorList>
            <person name="Rabus R."/>
            <person name="Kube M."/>
            <person name="Heider J."/>
            <person name="Beck A."/>
            <person name="Heitmann K."/>
            <person name="Widdel F."/>
            <person name="Reinhardt R."/>
        </authorList>
    </citation>
    <scope>NUCLEOTIDE SEQUENCE [LARGE SCALE GENOMIC DNA]</scope>
    <source>
        <strain>DSM 19018 / LMG 30748 / EbN1</strain>
    </source>
</reference>
<organism>
    <name type="scientific">Aromatoleum aromaticum (strain DSM 19018 / LMG 30748 / EbN1)</name>
    <name type="common">Azoarcus sp. (strain EbN1)</name>
    <dbReference type="NCBI Taxonomy" id="76114"/>
    <lineage>
        <taxon>Bacteria</taxon>
        <taxon>Pseudomonadati</taxon>
        <taxon>Pseudomonadota</taxon>
        <taxon>Betaproteobacteria</taxon>
        <taxon>Rhodocyclales</taxon>
        <taxon>Rhodocyclaceae</taxon>
        <taxon>Aromatoleum</taxon>
    </lineage>
</organism>
<comment type="function">
    <text evidence="1">NDH-1 shuttles electrons from NADH, via FMN and iron-sulfur (Fe-S) centers, to quinones in the respiratory chain. The immediate electron acceptor for the enzyme in this species is believed to be ubiquinone. Couples the redox reaction to proton translocation (for every two electrons transferred, four hydrogen ions are translocated across the cytoplasmic membrane), and thus conserves the redox energy in a proton gradient.</text>
</comment>
<comment type="catalytic activity">
    <reaction evidence="1">
        <text>a quinone + NADH + 5 H(+)(in) = a quinol + NAD(+) + 4 H(+)(out)</text>
        <dbReference type="Rhea" id="RHEA:57888"/>
        <dbReference type="ChEBI" id="CHEBI:15378"/>
        <dbReference type="ChEBI" id="CHEBI:24646"/>
        <dbReference type="ChEBI" id="CHEBI:57540"/>
        <dbReference type="ChEBI" id="CHEBI:57945"/>
        <dbReference type="ChEBI" id="CHEBI:132124"/>
    </reaction>
</comment>
<comment type="subunit">
    <text evidence="1">NDH-1 is composed of 14 different subunits. Subunits NuoA, H, J, K, L, M, N constitute the membrane sector of the complex.</text>
</comment>
<comment type="subcellular location">
    <subcellularLocation>
        <location evidence="1">Cell inner membrane</location>
        <topology evidence="1">Multi-pass membrane protein</topology>
    </subcellularLocation>
</comment>
<comment type="similarity">
    <text evidence="1">Belongs to the complex I subunit 4L family.</text>
</comment>
<gene>
    <name evidence="1" type="primary">nuoK</name>
    <name type="ordered locus">AZOSEA27490</name>
    <name type="ORF">ebB168</name>
</gene>
<protein>
    <recommendedName>
        <fullName evidence="1">NADH-quinone oxidoreductase subunit K</fullName>
        <ecNumber evidence="1">7.1.1.-</ecNumber>
    </recommendedName>
    <alternativeName>
        <fullName evidence="1">NADH dehydrogenase I subunit K</fullName>
    </alternativeName>
    <alternativeName>
        <fullName evidence="1">NDH-1 subunit K</fullName>
    </alternativeName>
</protein>
<name>NUOK_AROAE</name>
<proteinExistence type="inferred from homology"/>
<evidence type="ECO:0000255" key="1">
    <source>
        <dbReference type="HAMAP-Rule" id="MF_01456"/>
    </source>
</evidence>
<sequence length="101" mass="11043">MLSLSHYLVLGAILFAISVVGIFLNRKNLIVLLMAIELMLLAVNLNFIAFSHYLGDLAGQIFVFFILTVAAAESAIGLAILVVLFRNLRTIHVDDLDSLKG</sequence>
<feature type="chain" id="PRO_0000389934" description="NADH-quinone oxidoreductase subunit K">
    <location>
        <begin position="1"/>
        <end position="101"/>
    </location>
</feature>
<feature type="transmembrane region" description="Helical" evidence="1">
    <location>
        <begin position="4"/>
        <end position="24"/>
    </location>
</feature>
<feature type="transmembrane region" description="Helical" evidence="1">
    <location>
        <begin position="30"/>
        <end position="50"/>
    </location>
</feature>
<feature type="transmembrane region" description="Helical" evidence="1">
    <location>
        <begin position="61"/>
        <end position="81"/>
    </location>
</feature>
<keyword id="KW-0997">Cell inner membrane</keyword>
<keyword id="KW-1003">Cell membrane</keyword>
<keyword id="KW-0472">Membrane</keyword>
<keyword id="KW-0520">NAD</keyword>
<keyword id="KW-0874">Quinone</keyword>
<keyword id="KW-1185">Reference proteome</keyword>
<keyword id="KW-1278">Translocase</keyword>
<keyword id="KW-0812">Transmembrane</keyword>
<keyword id="KW-1133">Transmembrane helix</keyword>
<keyword id="KW-0813">Transport</keyword>
<keyword id="KW-0830">Ubiquinone</keyword>